<evidence type="ECO:0000255" key="1"/>
<accession>Q58166</accession>
<name>Y756_METJA</name>
<keyword id="KW-1185">Reference proteome</keyword>
<keyword id="KW-0732">Signal</keyword>
<organism>
    <name type="scientific">Methanocaldococcus jannaschii (strain ATCC 43067 / DSM 2661 / JAL-1 / JCM 10045 / NBRC 100440)</name>
    <name type="common">Methanococcus jannaschii</name>
    <dbReference type="NCBI Taxonomy" id="243232"/>
    <lineage>
        <taxon>Archaea</taxon>
        <taxon>Methanobacteriati</taxon>
        <taxon>Methanobacteriota</taxon>
        <taxon>Methanomada group</taxon>
        <taxon>Methanococci</taxon>
        <taxon>Methanococcales</taxon>
        <taxon>Methanocaldococcaceae</taxon>
        <taxon>Methanocaldococcus</taxon>
    </lineage>
</organism>
<reference key="1">
    <citation type="journal article" date="1996" name="Science">
        <title>Complete genome sequence of the methanogenic archaeon, Methanococcus jannaschii.</title>
        <authorList>
            <person name="Bult C.J."/>
            <person name="White O."/>
            <person name="Olsen G.J."/>
            <person name="Zhou L."/>
            <person name="Fleischmann R.D."/>
            <person name="Sutton G.G."/>
            <person name="Blake J.A."/>
            <person name="FitzGerald L.M."/>
            <person name="Clayton R.A."/>
            <person name="Gocayne J.D."/>
            <person name="Kerlavage A.R."/>
            <person name="Dougherty B.A."/>
            <person name="Tomb J.-F."/>
            <person name="Adams M.D."/>
            <person name="Reich C.I."/>
            <person name="Overbeek R."/>
            <person name="Kirkness E.F."/>
            <person name="Weinstock K.G."/>
            <person name="Merrick J.M."/>
            <person name="Glodek A."/>
            <person name="Scott J.L."/>
            <person name="Geoghagen N.S.M."/>
            <person name="Weidman J.F."/>
            <person name="Fuhrmann J.L."/>
            <person name="Nguyen D."/>
            <person name="Utterback T.R."/>
            <person name="Kelley J.M."/>
            <person name="Peterson J.D."/>
            <person name="Sadow P.W."/>
            <person name="Hanna M.C."/>
            <person name="Cotton M.D."/>
            <person name="Roberts K.M."/>
            <person name="Hurst M.A."/>
            <person name="Kaine B.P."/>
            <person name="Borodovsky M."/>
            <person name="Klenk H.-P."/>
            <person name="Fraser C.M."/>
            <person name="Smith H.O."/>
            <person name="Woese C.R."/>
            <person name="Venter J.C."/>
        </authorList>
    </citation>
    <scope>NUCLEOTIDE SEQUENCE [LARGE SCALE GENOMIC DNA]</scope>
    <source>
        <strain>ATCC 43067 / DSM 2661 / JAL-1 / JCM 10045 / NBRC 100440</strain>
    </source>
</reference>
<gene>
    <name type="ordered locus">MJ0756</name>
</gene>
<dbReference type="EMBL" id="L77117">
    <property type="protein sequence ID" value="AAB98757.1"/>
    <property type="molecule type" value="Genomic_DNA"/>
</dbReference>
<dbReference type="PIR" id="D64394">
    <property type="entry name" value="D64394"/>
</dbReference>
<dbReference type="RefSeq" id="WP_010870261.1">
    <property type="nucleotide sequence ID" value="NC_000909.1"/>
</dbReference>
<dbReference type="STRING" id="243232.MJ_0756"/>
<dbReference type="PaxDb" id="243232-MJ_0756"/>
<dbReference type="EnsemblBacteria" id="AAB98757">
    <property type="protein sequence ID" value="AAB98757"/>
    <property type="gene ID" value="MJ_0756"/>
</dbReference>
<dbReference type="GeneID" id="1451633"/>
<dbReference type="KEGG" id="mja:MJ_0756"/>
<dbReference type="eggNOG" id="arCOG07800">
    <property type="taxonomic scope" value="Archaea"/>
</dbReference>
<dbReference type="HOGENOM" id="CLU_1870748_0_0_2"/>
<dbReference type="InParanoid" id="Q58166"/>
<dbReference type="OrthoDB" id="65773at2157"/>
<dbReference type="Proteomes" id="UP000000805">
    <property type="component" value="Chromosome"/>
</dbReference>
<feature type="signal peptide" evidence="1">
    <location>
        <begin position="1"/>
        <end position="19"/>
    </location>
</feature>
<feature type="chain" id="PRO_0000013996" description="Uncharacterized protein MJ0756">
    <location>
        <begin position="20"/>
        <end position="136"/>
    </location>
</feature>
<proteinExistence type="inferred from homology"/>
<protein>
    <recommendedName>
        <fullName>Uncharacterized protein MJ0756</fullName>
    </recommendedName>
</protein>
<sequence>MKKLLMVILGIALIGMAYAFPPWMAYQTQTTENTDINPVDILKTAEVVQHTTPFGYNLSHLEIDGKIVGVLWKDVDLSKLEVGEPFNTPFGEKYPLYYDRELVGFIFTNHPASHYGYGMRGGYGCHCHCGCCCWQQ</sequence>